<dbReference type="EC" id="1.13.11.27" evidence="2"/>
<dbReference type="EMBL" id="D29987">
    <property type="protein sequence ID" value="BAA06267.1"/>
    <property type="molecule type" value="mRNA"/>
</dbReference>
<dbReference type="EMBL" id="AK149416">
    <property type="protein sequence ID" value="BAE28861.1"/>
    <property type="molecule type" value="mRNA"/>
</dbReference>
<dbReference type="EMBL" id="BC013343">
    <property type="protein sequence ID" value="AAH13343.1"/>
    <property type="molecule type" value="mRNA"/>
</dbReference>
<dbReference type="EMBL" id="X59530">
    <property type="protein sequence ID" value="CAA42111.1"/>
    <property type="molecule type" value="mRNA"/>
</dbReference>
<dbReference type="CCDS" id="CCDS39265.1"/>
<dbReference type="PIR" id="A60236">
    <property type="entry name" value="A60236"/>
</dbReference>
<dbReference type="RefSeq" id="NP_032303.1">
    <property type="nucleotide sequence ID" value="NM_008277.3"/>
</dbReference>
<dbReference type="SMR" id="P49429"/>
<dbReference type="BioGRID" id="200405">
    <property type="interactions" value="3"/>
</dbReference>
<dbReference type="FunCoup" id="P49429">
    <property type="interactions" value="789"/>
</dbReference>
<dbReference type="STRING" id="10090.ENSMUSP00000031398"/>
<dbReference type="GlyGen" id="P49429">
    <property type="glycosylation" value="1 site, 1 O-linked glycan (1 site)"/>
</dbReference>
<dbReference type="iPTMnet" id="P49429"/>
<dbReference type="PhosphoSitePlus" id="P49429"/>
<dbReference type="SwissPalm" id="P49429"/>
<dbReference type="jPOST" id="P49429"/>
<dbReference type="PaxDb" id="10090-ENSMUSP00000031398"/>
<dbReference type="PeptideAtlas" id="P49429"/>
<dbReference type="ProteomicsDB" id="273167"/>
<dbReference type="Antibodypedia" id="31595">
    <property type="antibodies" value="327 antibodies from 32 providers"/>
</dbReference>
<dbReference type="DNASU" id="15445"/>
<dbReference type="Ensembl" id="ENSMUST00000031398.14">
    <property type="protein sequence ID" value="ENSMUSP00000031398.8"/>
    <property type="gene ID" value="ENSMUSG00000029445.14"/>
</dbReference>
<dbReference type="GeneID" id="15445"/>
<dbReference type="KEGG" id="mmu:15445"/>
<dbReference type="UCSC" id="uc008znj.1">
    <property type="organism name" value="mouse"/>
</dbReference>
<dbReference type="AGR" id="MGI:96213"/>
<dbReference type="CTD" id="3242"/>
<dbReference type="MGI" id="MGI:96213">
    <property type="gene designation" value="Hpd"/>
</dbReference>
<dbReference type="VEuPathDB" id="HostDB:ENSMUSG00000029445"/>
<dbReference type="eggNOG" id="KOG0638">
    <property type="taxonomic scope" value="Eukaryota"/>
</dbReference>
<dbReference type="GeneTree" id="ENSGT00530000063474"/>
<dbReference type="HOGENOM" id="CLU_034004_3_1_1"/>
<dbReference type="InParanoid" id="P49429"/>
<dbReference type="OMA" id="DPFPVKG"/>
<dbReference type="OrthoDB" id="414569at2759"/>
<dbReference type="PhylomeDB" id="P49429"/>
<dbReference type="TreeFam" id="TF300622"/>
<dbReference type="Reactome" id="R-MMU-8963684">
    <property type="pathway name" value="Tyrosine catabolism"/>
</dbReference>
<dbReference type="SABIO-RK" id="P49429"/>
<dbReference type="UniPathway" id="UPA00139">
    <property type="reaction ID" value="UER00362"/>
</dbReference>
<dbReference type="BioGRID-ORCS" id="15445">
    <property type="hits" value="2 hits in 78 CRISPR screens"/>
</dbReference>
<dbReference type="ChiTaRS" id="Hpd">
    <property type="organism name" value="mouse"/>
</dbReference>
<dbReference type="PRO" id="PR:P49429"/>
<dbReference type="Proteomes" id="UP000000589">
    <property type="component" value="Chromosome 5"/>
</dbReference>
<dbReference type="RNAct" id="P49429">
    <property type="molecule type" value="protein"/>
</dbReference>
<dbReference type="Bgee" id="ENSMUSG00000029445">
    <property type="expression patterns" value="Expressed in left lobe of liver and 75 other cell types or tissues"/>
</dbReference>
<dbReference type="ExpressionAtlas" id="P49429">
    <property type="expression patterns" value="baseline and differential"/>
</dbReference>
<dbReference type="GO" id="GO:0005783">
    <property type="term" value="C:endoplasmic reticulum"/>
    <property type="evidence" value="ECO:0000266"/>
    <property type="project" value="MGI"/>
</dbReference>
<dbReference type="GO" id="GO:0005789">
    <property type="term" value="C:endoplasmic reticulum membrane"/>
    <property type="evidence" value="ECO:0007669"/>
    <property type="project" value="UniProtKB-SubCell"/>
</dbReference>
<dbReference type="GO" id="GO:0005794">
    <property type="term" value="C:Golgi apparatus"/>
    <property type="evidence" value="ECO:0000266"/>
    <property type="project" value="MGI"/>
</dbReference>
<dbReference type="GO" id="GO:0000139">
    <property type="term" value="C:Golgi membrane"/>
    <property type="evidence" value="ECO:0007669"/>
    <property type="project" value="UniProtKB-SubCell"/>
</dbReference>
<dbReference type="GO" id="GO:0003868">
    <property type="term" value="F:4-hydroxyphenylpyruvate dioxygenase activity"/>
    <property type="evidence" value="ECO:0000250"/>
    <property type="project" value="UniProtKB"/>
</dbReference>
<dbReference type="GO" id="GO:0046872">
    <property type="term" value="F:metal ion binding"/>
    <property type="evidence" value="ECO:0007669"/>
    <property type="project" value="UniProtKB-KW"/>
</dbReference>
<dbReference type="GO" id="GO:0042803">
    <property type="term" value="F:protein homodimerization activity"/>
    <property type="evidence" value="ECO:0000250"/>
    <property type="project" value="UniProtKB"/>
</dbReference>
<dbReference type="GO" id="GO:0006559">
    <property type="term" value="P:L-phenylalanine catabolic process"/>
    <property type="evidence" value="ECO:0007669"/>
    <property type="project" value="UniProtKB-UniPathway"/>
</dbReference>
<dbReference type="GO" id="GO:0006572">
    <property type="term" value="P:tyrosine catabolic process"/>
    <property type="evidence" value="ECO:0000250"/>
    <property type="project" value="UniProtKB"/>
</dbReference>
<dbReference type="CDD" id="cd07250">
    <property type="entry name" value="HPPD_C_like"/>
    <property type="match status" value="1"/>
</dbReference>
<dbReference type="CDD" id="cd08342">
    <property type="entry name" value="HPPD_N_like"/>
    <property type="match status" value="1"/>
</dbReference>
<dbReference type="FunFam" id="3.10.180.10:FF:000008">
    <property type="entry name" value="4-hydroxyphenylpyruvate dioxygenase"/>
    <property type="match status" value="1"/>
</dbReference>
<dbReference type="FunFam" id="3.10.180.10:FF:000022">
    <property type="entry name" value="4-hydroxyphenylpyruvate dioxygenase"/>
    <property type="match status" value="1"/>
</dbReference>
<dbReference type="Gene3D" id="3.10.180.10">
    <property type="entry name" value="2,3-Dihydroxybiphenyl 1,2-Dioxygenase, domain 1"/>
    <property type="match status" value="2"/>
</dbReference>
<dbReference type="InterPro" id="IPR005956">
    <property type="entry name" value="4OHPhenylPyrv_dOase"/>
</dbReference>
<dbReference type="InterPro" id="IPR041735">
    <property type="entry name" value="4OHPhenylPyrv_dOase_C"/>
</dbReference>
<dbReference type="InterPro" id="IPR041736">
    <property type="entry name" value="4OHPhenylPyrv_dOase_N"/>
</dbReference>
<dbReference type="InterPro" id="IPR029068">
    <property type="entry name" value="Glyas_Bleomycin-R_OHBP_Dase"/>
</dbReference>
<dbReference type="InterPro" id="IPR004360">
    <property type="entry name" value="Glyas_Fos-R_dOase_dom"/>
</dbReference>
<dbReference type="InterPro" id="IPR037523">
    <property type="entry name" value="VOC"/>
</dbReference>
<dbReference type="NCBIfam" id="TIGR01263">
    <property type="entry name" value="4HPPD"/>
    <property type="match status" value="1"/>
</dbReference>
<dbReference type="PANTHER" id="PTHR11959">
    <property type="entry name" value="4-HYDROXYPHENYLPYRUVATE DIOXYGENASE"/>
    <property type="match status" value="1"/>
</dbReference>
<dbReference type="PANTHER" id="PTHR11959:SF12">
    <property type="entry name" value="4-HYDROXYPHENYLPYRUVATE DIOXYGENASE"/>
    <property type="match status" value="1"/>
</dbReference>
<dbReference type="Pfam" id="PF00903">
    <property type="entry name" value="Glyoxalase"/>
    <property type="match status" value="2"/>
</dbReference>
<dbReference type="PIRSF" id="PIRSF009283">
    <property type="entry name" value="HPP_dOase"/>
    <property type="match status" value="1"/>
</dbReference>
<dbReference type="SUPFAM" id="SSF54593">
    <property type="entry name" value="Glyoxalase/Bleomycin resistance protein/Dihydroxybiphenyl dioxygenase"/>
    <property type="match status" value="1"/>
</dbReference>
<dbReference type="PROSITE" id="PS51819">
    <property type="entry name" value="VOC"/>
    <property type="match status" value="2"/>
</dbReference>
<reference key="1">
    <citation type="journal article" date="1995" name="Genomics">
        <title>A nonsense mutation in the 4-hydroxyphenylpyruvic acid dioxygenase gene (Hpd) causes skipping of the constitutive exon and hypertyrosinemia in mouse strain III.</title>
        <authorList>
            <person name="Endo F."/>
            <person name="Awata H."/>
            <person name="Katoh H."/>
            <person name="Matsuda I."/>
        </authorList>
    </citation>
    <scope>NUCLEOTIDE SEQUENCE [MRNA]</scope>
    <source>
        <strain>BALB/cJ</strain>
        <tissue>Liver</tissue>
    </source>
</reference>
<reference key="2">
    <citation type="journal article" date="2005" name="Science">
        <title>The transcriptional landscape of the mammalian genome.</title>
        <authorList>
            <person name="Carninci P."/>
            <person name="Kasukawa T."/>
            <person name="Katayama S."/>
            <person name="Gough J."/>
            <person name="Frith M.C."/>
            <person name="Maeda N."/>
            <person name="Oyama R."/>
            <person name="Ravasi T."/>
            <person name="Lenhard B."/>
            <person name="Wells C."/>
            <person name="Kodzius R."/>
            <person name="Shimokawa K."/>
            <person name="Bajic V.B."/>
            <person name="Brenner S.E."/>
            <person name="Batalov S."/>
            <person name="Forrest A.R."/>
            <person name="Zavolan M."/>
            <person name="Davis M.J."/>
            <person name="Wilming L.G."/>
            <person name="Aidinis V."/>
            <person name="Allen J.E."/>
            <person name="Ambesi-Impiombato A."/>
            <person name="Apweiler R."/>
            <person name="Aturaliya R.N."/>
            <person name="Bailey T.L."/>
            <person name="Bansal M."/>
            <person name="Baxter L."/>
            <person name="Beisel K.W."/>
            <person name="Bersano T."/>
            <person name="Bono H."/>
            <person name="Chalk A.M."/>
            <person name="Chiu K.P."/>
            <person name="Choudhary V."/>
            <person name="Christoffels A."/>
            <person name="Clutterbuck D.R."/>
            <person name="Crowe M.L."/>
            <person name="Dalla E."/>
            <person name="Dalrymple B.P."/>
            <person name="de Bono B."/>
            <person name="Della Gatta G."/>
            <person name="di Bernardo D."/>
            <person name="Down T."/>
            <person name="Engstrom P."/>
            <person name="Fagiolini M."/>
            <person name="Faulkner G."/>
            <person name="Fletcher C.F."/>
            <person name="Fukushima T."/>
            <person name="Furuno M."/>
            <person name="Futaki S."/>
            <person name="Gariboldi M."/>
            <person name="Georgii-Hemming P."/>
            <person name="Gingeras T.R."/>
            <person name="Gojobori T."/>
            <person name="Green R.E."/>
            <person name="Gustincich S."/>
            <person name="Harbers M."/>
            <person name="Hayashi Y."/>
            <person name="Hensch T.K."/>
            <person name="Hirokawa N."/>
            <person name="Hill D."/>
            <person name="Huminiecki L."/>
            <person name="Iacono M."/>
            <person name="Ikeo K."/>
            <person name="Iwama A."/>
            <person name="Ishikawa T."/>
            <person name="Jakt M."/>
            <person name="Kanapin A."/>
            <person name="Katoh M."/>
            <person name="Kawasawa Y."/>
            <person name="Kelso J."/>
            <person name="Kitamura H."/>
            <person name="Kitano H."/>
            <person name="Kollias G."/>
            <person name="Krishnan S.P."/>
            <person name="Kruger A."/>
            <person name="Kummerfeld S.K."/>
            <person name="Kurochkin I.V."/>
            <person name="Lareau L.F."/>
            <person name="Lazarevic D."/>
            <person name="Lipovich L."/>
            <person name="Liu J."/>
            <person name="Liuni S."/>
            <person name="McWilliam S."/>
            <person name="Madan Babu M."/>
            <person name="Madera M."/>
            <person name="Marchionni L."/>
            <person name="Matsuda H."/>
            <person name="Matsuzawa S."/>
            <person name="Miki H."/>
            <person name="Mignone F."/>
            <person name="Miyake S."/>
            <person name="Morris K."/>
            <person name="Mottagui-Tabar S."/>
            <person name="Mulder N."/>
            <person name="Nakano N."/>
            <person name="Nakauchi H."/>
            <person name="Ng P."/>
            <person name="Nilsson R."/>
            <person name="Nishiguchi S."/>
            <person name="Nishikawa S."/>
            <person name="Nori F."/>
            <person name="Ohara O."/>
            <person name="Okazaki Y."/>
            <person name="Orlando V."/>
            <person name="Pang K.C."/>
            <person name="Pavan W.J."/>
            <person name="Pavesi G."/>
            <person name="Pesole G."/>
            <person name="Petrovsky N."/>
            <person name="Piazza S."/>
            <person name="Reed J."/>
            <person name="Reid J.F."/>
            <person name="Ring B.Z."/>
            <person name="Ringwald M."/>
            <person name="Rost B."/>
            <person name="Ruan Y."/>
            <person name="Salzberg S.L."/>
            <person name="Sandelin A."/>
            <person name="Schneider C."/>
            <person name="Schoenbach C."/>
            <person name="Sekiguchi K."/>
            <person name="Semple C.A."/>
            <person name="Seno S."/>
            <person name="Sessa L."/>
            <person name="Sheng Y."/>
            <person name="Shibata Y."/>
            <person name="Shimada H."/>
            <person name="Shimada K."/>
            <person name="Silva D."/>
            <person name="Sinclair B."/>
            <person name="Sperling S."/>
            <person name="Stupka E."/>
            <person name="Sugiura K."/>
            <person name="Sultana R."/>
            <person name="Takenaka Y."/>
            <person name="Taki K."/>
            <person name="Tammoja K."/>
            <person name="Tan S.L."/>
            <person name="Tang S."/>
            <person name="Taylor M.S."/>
            <person name="Tegner J."/>
            <person name="Teichmann S.A."/>
            <person name="Ueda H.R."/>
            <person name="van Nimwegen E."/>
            <person name="Verardo R."/>
            <person name="Wei C.L."/>
            <person name="Yagi K."/>
            <person name="Yamanishi H."/>
            <person name="Zabarovsky E."/>
            <person name="Zhu S."/>
            <person name="Zimmer A."/>
            <person name="Hide W."/>
            <person name="Bult C."/>
            <person name="Grimmond S.M."/>
            <person name="Teasdale R.D."/>
            <person name="Liu E.T."/>
            <person name="Brusic V."/>
            <person name="Quackenbush J."/>
            <person name="Wahlestedt C."/>
            <person name="Mattick J.S."/>
            <person name="Hume D.A."/>
            <person name="Kai C."/>
            <person name="Sasaki D."/>
            <person name="Tomaru Y."/>
            <person name="Fukuda S."/>
            <person name="Kanamori-Katayama M."/>
            <person name="Suzuki M."/>
            <person name="Aoki J."/>
            <person name="Arakawa T."/>
            <person name="Iida J."/>
            <person name="Imamura K."/>
            <person name="Itoh M."/>
            <person name="Kato T."/>
            <person name="Kawaji H."/>
            <person name="Kawagashira N."/>
            <person name="Kawashima T."/>
            <person name="Kojima M."/>
            <person name="Kondo S."/>
            <person name="Konno H."/>
            <person name="Nakano K."/>
            <person name="Ninomiya N."/>
            <person name="Nishio T."/>
            <person name="Okada M."/>
            <person name="Plessy C."/>
            <person name="Shibata K."/>
            <person name="Shiraki T."/>
            <person name="Suzuki S."/>
            <person name="Tagami M."/>
            <person name="Waki K."/>
            <person name="Watahiki A."/>
            <person name="Okamura-Oho Y."/>
            <person name="Suzuki H."/>
            <person name="Kawai J."/>
            <person name="Hayashizaki Y."/>
        </authorList>
    </citation>
    <scope>NUCLEOTIDE SEQUENCE [LARGE SCALE MRNA]</scope>
    <source>
        <strain>C57BL/6J</strain>
        <tissue>Liver</tissue>
    </source>
</reference>
<reference key="3">
    <citation type="journal article" date="2004" name="Genome Res.">
        <title>The status, quality, and expansion of the NIH full-length cDNA project: the Mammalian Gene Collection (MGC).</title>
        <authorList>
            <consortium name="The MGC Project Team"/>
        </authorList>
    </citation>
    <scope>NUCLEOTIDE SEQUENCE [LARGE SCALE MRNA]</scope>
    <source>
        <strain>FVB/N</strain>
        <tissue>Salivary gland</tissue>
    </source>
</reference>
<reference key="4">
    <citation type="journal article" date="1991" name="Eur. J. Immunol.">
        <title>Sequences of the mouse F protein alleles and identification of a T cell epitope.</title>
        <authorList>
            <person name="Schofield J.P."/>
            <person name="Vijayakumar R.K."/>
            <person name="Oliveira D.B.G."/>
        </authorList>
    </citation>
    <scope>NUCLEOTIDE SEQUENCE [MRNA] OF 1-379</scope>
    <scope>VARIANT ASN-104</scope>
    <source>
        <strain>CBA/J</strain>
        <tissue>Liver</tissue>
    </source>
</reference>
<reference key="5">
    <citation type="journal article" date="2007" name="Proc. Natl. Acad. Sci. U.S.A.">
        <title>Large-scale phosphorylation analysis of mouse liver.</title>
        <authorList>
            <person name="Villen J."/>
            <person name="Beausoleil S.A."/>
            <person name="Gerber S.A."/>
            <person name="Gygi S.P."/>
        </authorList>
    </citation>
    <scope>PHOSPHORYLATION [LARGE SCALE ANALYSIS] AT SER-211; SER-226 AND SER-250</scope>
    <scope>IDENTIFICATION BY MASS SPECTROMETRY [LARGE SCALE ANALYSIS]</scope>
    <source>
        <tissue>Liver</tissue>
    </source>
</reference>
<reference key="6">
    <citation type="journal article" date="2010" name="Cell">
        <title>A tissue-specific atlas of mouse protein phosphorylation and expression.</title>
        <authorList>
            <person name="Huttlin E.L."/>
            <person name="Jedrychowski M.P."/>
            <person name="Elias J.E."/>
            <person name="Goswami T."/>
            <person name="Rad R."/>
            <person name="Beausoleil S.A."/>
            <person name="Villen J."/>
            <person name="Haas W."/>
            <person name="Sowa M.E."/>
            <person name="Gygi S.P."/>
        </authorList>
    </citation>
    <scope>PHOSPHORYLATION [LARGE SCALE ANALYSIS] AT SER-211 AND SER-250</scope>
    <scope>IDENTIFICATION BY MASS SPECTROMETRY [LARGE SCALE ANALYSIS]</scope>
    <source>
        <tissue>Kidney</tissue>
        <tissue>Liver</tissue>
    </source>
</reference>
<reference key="7">
    <citation type="journal article" date="2013" name="Mol. Cell">
        <title>SIRT5-mediated lysine desuccinylation impacts diverse metabolic pathways.</title>
        <authorList>
            <person name="Park J."/>
            <person name="Chen Y."/>
            <person name="Tishkoff D.X."/>
            <person name="Peng C."/>
            <person name="Tan M."/>
            <person name="Dai L."/>
            <person name="Xie Z."/>
            <person name="Zhang Y."/>
            <person name="Zwaans B.M."/>
            <person name="Skinner M.E."/>
            <person name="Lombard D.B."/>
            <person name="Zhao Y."/>
        </authorList>
    </citation>
    <scope>SUCCINYLATION [LARGE SCALE ANALYSIS] AT LYS-132</scope>
    <scope>IDENTIFICATION BY MASS SPECTROMETRY [LARGE SCALE ANALYSIS]</scope>
    <source>
        <tissue>Liver</tissue>
    </source>
</reference>
<keyword id="KW-0007">Acetylation</keyword>
<keyword id="KW-0963">Cytoplasm</keyword>
<keyword id="KW-0223">Dioxygenase</keyword>
<keyword id="KW-0256">Endoplasmic reticulum</keyword>
<keyword id="KW-0333">Golgi apparatus</keyword>
<keyword id="KW-0408">Iron</keyword>
<keyword id="KW-0472">Membrane</keyword>
<keyword id="KW-0479">Metal-binding</keyword>
<keyword id="KW-0560">Oxidoreductase</keyword>
<keyword id="KW-0585">Phenylalanine catabolism</keyword>
<keyword id="KW-0597">Phosphoprotein</keyword>
<keyword id="KW-1185">Reference proteome</keyword>
<keyword id="KW-0677">Repeat</keyword>
<keyword id="KW-0828">Tyrosine catabolism</keyword>
<feature type="initiator methionine" description="Removed" evidence="1">
    <location>
        <position position="1"/>
    </location>
</feature>
<feature type="chain" id="PRO_0000088389" description="4-hydroxyphenylpyruvate dioxygenase">
    <location>
        <begin position="2"/>
        <end position="393"/>
    </location>
</feature>
<feature type="domain" description="VOC 1" evidence="3">
    <location>
        <begin position="18"/>
        <end position="149"/>
    </location>
</feature>
<feature type="domain" description="VOC 2" evidence="3">
    <location>
        <begin position="180"/>
        <end position="338"/>
    </location>
</feature>
<feature type="binding site" evidence="2">
    <location>
        <position position="183"/>
    </location>
    <ligand>
        <name>Fe cation</name>
        <dbReference type="ChEBI" id="CHEBI:24875"/>
    </ligand>
</feature>
<feature type="binding site" evidence="2">
    <location>
        <position position="266"/>
    </location>
    <ligand>
        <name>Fe cation</name>
        <dbReference type="ChEBI" id="CHEBI:24875"/>
    </ligand>
</feature>
<feature type="binding site" evidence="2">
    <location>
        <position position="349"/>
    </location>
    <ligand>
        <name>Fe cation</name>
        <dbReference type="ChEBI" id="CHEBI:24875"/>
    </ligand>
</feature>
<feature type="modified residue" description="N-acetylthreonine" evidence="1">
    <location>
        <position position="2"/>
    </location>
</feature>
<feature type="modified residue" description="N6-succinyllysine" evidence="8">
    <location>
        <position position="132"/>
    </location>
</feature>
<feature type="modified residue" description="Phosphoserine" evidence="6 7">
    <location>
        <position position="211"/>
    </location>
</feature>
<feature type="modified residue" description="Phosphoserine" evidence="6">
    <location>
        <position position="226"/>
    </location>
</feature>
<feature type="modified residue" description="Phosphoserine" evidence="6 7">
    <location>
        <position position="250"/>
    </location>
</feature>
<feature type="sequence variant" description="In allele F1." evidence="4">
    <original>D</original>
    <variation>N</variation>
    <location>
        <position position="104"/>
    </location>
</feature>
<feature type="sequence conflict" description="In Ref. 4; CAA42111." evidence="5" ref="4">
    <original>TTYNN</original>
    <variation>VDYWD</variation>
    <location>
        <begin position="2"/>
        <end position="6"/>
    </location>
</feature>
<feature type="sequence conflict" description="In Ref. 1; BAA06267." evidence="5" ref="1">
    <original>Q</original>
    <variation>R</variation>
    <location>
        <position position="64"/>
    </location>
</feature>
<feature type="sequence conflict" description="In Ref. 4; CAA42111." evidence="5" ref="4">
    <original>EP</original>
    <variation>DA</variation>
    <location>
        <begin position="120"/>
        <end position="121"/>
    </location>
</feature>
<feature type="sequence conflict" description="In Ref. 2; BAE28861." evidence="5" ref="2">
    <original>F</original>
    <variation>S</variation>
    <location>
        <position position="206"/>
    </location>
</feature>
<accession>P49429</accession>
<accession>P97322</accession>
<accession>Q3UEQ0</accession>
<accession>Q91WV9</accession>
<evidence type="ECO:0000250" key="1">
    <source>
        <dbReference type="UniProtKB" id="P32754"/>
    </source>
</evidence>
<evidence type="ECO:0000250" key="2">
    <source>
        <dbReference type="UniProtKB" id="P32755"/>
    </source>
</evidence>
<evidence type="ECO:0000255" key="3">
    <source>
        <dbReference type="PROSITE-ProRule" id="PRU01163"/>
    </source>
</evidence>
<evidence type="ECO:0000269" key="4">
    <source>
    </source>
</evidence>
<evidence type="ECO:0000305" key="5"/>
<evidence type="ECO:0007744" key="6">
    <source>
    </source>
</evidence>
<evidence type="ECO:0007744" key="7">
    <source>
    </source>
</evidence>
<evidence type="ECO:0007744" key="8">
    <source>
    </source>
</evidence>
<proteinExistence type="evidence at protein level"/>
<comment type="function">
    <text evidence="2">Catalyzes the conversion of 4-hydroxyphenylpyruvic acid to homogentisic acid, one of the steps in tyrosine catabolism.</text>
</comment>
<comment type="catalytic activity">
    <reaction evidence="2">
        <text>3-(4-hydroxyphenyl)pyruvate + O2 = homogentisate + CO2</text>
        <dbReference type="Rhea" id="RHEA:16189"/>
        <dbReference type="ChEBI" id="CHEBI:15379"/>
        <dbReference type="ChEBI" id="CHEBI:16169"/>
        <dbReference type="ChEBI" id="CHEBI:16526"/>
        <dbReference type="ChEBI" id="CHEBI:36242"/>
        <dbReference type="EC" id="1.13.11.27"/>
    </reaction>
    <physiologicalReaction direction="left-to-right" evidence="2">
        <dbReference type="Rhea" id="RHEA:16190"/>
    </physiologicalReaction>
</comment>
<comment type="cofactor">
    <cofactor evidence="2">
        <name>Fe cation</name>
        <dbReference type="ChEBI" id="CHEBI:24875"/>
    </cofactor>
    <text evidence="2">Binds 1 Fe cation per subunit.</text>
</comment>
<comment type="pathway">
    <text>Amino-acid degradation; L-phenylalanine degradation; acetoacetate and fumarate from L-phenylalanine: step 3/6.</text>
</comment>
<comment type="subunit">
    <text evidence="2">Homodimer.</text>
</comment>
<comment type="subcellular location">
    <subcellularLocation>
        <location evidence="2">Cytoplasm</location>
    </subcellularLocation>
    <subcellularLocation>
        <location evidence="2">Endoplasmic reticulum membrane</location>
        <topology evidence="2">Peripheral membrane protein</topology>
    </subcellularLocation>
    <subcellularLocation>
        <location evidence="2">Golgi apparatus membrane</location>
        <topology evidence="2">Peripheral membrane protein</topology>
    </subcellularLocation>
</comment>
<comment type="polymorphism">
    <text>There are two alleles (F1 and F2), F2 has Asp-104 and F1 has Asn-104. Mice are completely tolerant to the self form of the protein, but make a good antibody response to immunization with the non-self form.</text>
</comment>
<comment type="disease">
    <text>Defects in Hpd are the cause of tyrosinemia type III.</text>
</comment>
<comment type="similarity">
    <text evidence="5">Belongs to the 4HPPD family.</text>
</comment>
<sequence length="393" mass="45054">MTTYNNKGPKPERGRFLHFHSVTFWVGNAKQAASFYCNKMGFEPLAYRGLETGSREVVSHVIKQGKIVFVLCSALNPWNKEMGDHLVKHGDGVKDIAFEVEDCDHIVQKARERGAKIVREPWVEQDKFGKVKFAVLQTYGDTTHTLVEKINYTGRFLPGFEAPTYKDTLLPKLPRCNLEIIDHIVGNQPDQEMQSASEWYLKNLQFHRFWSVDDTQVHTEYSSLRSIVVTNYEESIKMPINEPAPGRKKSQIQEYVDYNGGAGVQHIALKTEDIITAIRHLRERGTEFLAAPSSYYKLLRENLKSAKIQVKESMDVLEELHILVDYDEKGYLLQIFTKPMQDRPTLFLEVIQRHNHQGFGAGNFNSLFKAFEEEQALRGNLTDLEPNGVRSGM</sequence>
<name>HPPD_MOUSE</name>
<protein>
    <recommendedName>
        <fullName>4-hydroxyphenylpyruvate dioxygenase</fullName>
        <ecNumber evidence="2">1.13.11.27</ecNumber>
    </recommendedName>
    <alternativeName>
        <fullName>4-hydroxyphenylpyruvic acid oxidase</fullName>
        <shortName>4HPPD</shortName>
        <shortName>HPD</shortName>
        <shortName>HPPDase</shortName>
    </alternativeName>
    <alternativeName>
        <fullName>F Alloantigen</fullName>
        <shortName>F protein</shortName>
    </alternativeName>
</protein>
<organism>
    <name type="scientific">Mus musculus</name>
    <name type="common">Mouse</name>
    <dbReference type="NCBI Taxonomy" id="10090"/>
    <lineage>
        <taxon>Eukaryota</taxon>
        <taxon>Metazoa</taxon>
        <taxon>Chordata</taxon>
        <taxon>Craniata</taxon>
        <taxon>Vertebrata</taxon>
        <taxon>Euteleostomi</taxon>
        <taxon>Mammalia</taxon>
        <taxon>Eutheria</taxon>
        <taxon>Euarchontoglires</taxon>
        <taxon>Glires</taxon>
        <taxon>Rodentia</taxon>
        <taxon>Myomorpha</taxon>
        <taxon>Muroidea</taxon>
        <taxon>Muridae</taxon>
        <taxon>Murinae</taxon>
        <taxon>Mus</taxon>
        <taxon>Mus</taxon>
    </lineage>
</organism>
<gene>
    <name type="primary">Hpd</name>
</gene>